<sequence>LGELKHLHYLHAALHESMRLYPPVQFDSKFAKHDDVLPDGTFVKRGSRVTYHPYAMGRMERIWGADSLEFKPERWIRDGEFKQERAYKYPVYQGGVRVCLGKEMSLVEMASVALCLIRRFDVSVVNHSQLRFAPGLTATVSGGVHATVRRRDLSQ</sequence>
<protein>
    <recommendedName>
        <fullName evidence="1">Cytochrome P450</fullName>
        <ecNumber>1.14.-.-</ecNumber>
    </recommendedName>
</protein>
<organism>
    <name type="scientific">Helianthus annuus</name>
    <name type="common">Common sunflower</name>
    <dbReference type="NCBI Taxonomy" id="4232"/>
    <lineage>
        <taxon>Eukaryota</taxon>
        <taxon>Viridiplantae</taxon>
        <taxon>Streptophyta</taxon>
        <taxon>Embryophyta</taxon>
        <taxon>Tracheophyta</taxon>
        <taxon>Spermatophyta</taxon>
        <taxon>Magnoliopsida</taxon>
        <taxon>eudicotyledons</taxon>
        <taxon>Gunneridae</taxon>
        <taxon>Pentapetalae</taxon>
        <taxon>asterids</taxon>
        <taxon>campanulids</taxon>
        <taxon>Asterales</taxon>
        <taxon>Asteraceae</taxon>
        <taxon>Asteroideae</taxon>
        <taxon>Heliantheae alliance</taxon>
        <taxon>Heliantheae</taxon>
        <taxon>Helianthus</taxon>
    </lineage>
</organism>
<keyword id="KW-0349">Heme</keyword>
<keyword id="KW-0408">Iron</keyword>
<keyword id="KW-0479">Metal-binding</keyword>
<keyword id="KW-0503">Monooxygenase</keyword>
<keyword id="KW-0560">Oxidoreductase</keyword>
<reference evidence="5" key="1">
    <citation type="submission" date="2002-08" db="EMBL/GenBank/DDBJ databases">
        <title>Lettuce and sunflower ESTs from the compositae genome project http://compgenomics.ucdavis.edu/.</title>
        <authorList>
            <person name="Kozik A."/>
            <person name="Michelmore R.W."/>
            <person name="Knapp S."/>
            <person name="Matvienko M."/>
            <person name="Rieseberg L."/>
            <person name="Lin H."/>
            <person name="van Damme M."/>
            <person name="Lavelle D."/>
            <person name="Chevalier P."/>
            <person name="Ziegle J."/>
            <person name="Ellison P."/>
            <person name="Kolkman J."/>
            <person name="Slabaugh M.S."/>
            <person name="Livingston K."/>
            <person name="Zhou Y."/>
            <person name="Lai Z."/>
            <person name="Church S."/>
            <person name="Jackson L."/>
            <person name="Bradford K."/>
        </authorList>
    </citation>
    <scope>NUCLEOTIDE SEQUENCE [LARGE SCALE MRNA]</scope>
    <source>
        <strain evidence="3">cv. RHA801</strain>
    </source>
</reference>
<reference evidence="5" key="2">
    <citation type="journal article" date="2009" name="Metallomics">
        <title>Evaluation of metal-ion stress in sunflower (Heliantus annus L.) leaves through proteomic changes.</title>
        <authorList>
            <person name="Garcia J.S."/>
            <person name="Souza G.H.M.F."/>
            <person name="Eberlin M.N."/>
            <person name="Arruda M.A.Z."/>
        </authorList>
    </citation>
    <scope>IDENTIFICATION BY MASS SPECTROMETRY</scope>
    <scope>INDUCTION</scope>
</reference>
<evidence type="ECO:0000250" key="1">
    <source>
        <dbReference type="UniProtKB" id="O81117"/>
    </source>
</evidence>
<evidence type="ECO:0000255" key="2"/>
<evidence type="ECO:0000269" key="3">
    <source ref="1"/>
</evidence>
<evidence type="ECO:0000269" key="4">
    <source ref="2"/>
</evidence>
<evidence type="ECO:0000305" key="5"/>
<comment type="cofactor">
    <cofactor evidence="1">
        <name>heme</name>
        <dbReference type="ChEBI" id="CHEBI:30413"/>
    </cofactor>
</comment>
<comment type="induction">
    <text evidence="4">Down-regulated in response to mixed metal ion contamination (cadmium, copper, lead and zinc), but not in response to zinc ion contamination.</text>
</comment>
<comment type="similarity">
    <text evidence="2">Belongs to the cytochrome P450 family.</text>
</comment>
<name>CP450_HELAN</name>
<proteinExistence type="evidence at protein level"/>
<feature type="chain" id="PRO_0000397224" description="Cytochrome P450">
    <location>
        <begin position="1" status="less than"/>
        <end position="155"/>
    </location>
</feature>
<feature type="binding site" description="axial binding residue" evidence="1">
    <location>
        <position position="99"/>
    </location>
    <ligand>
        <name>heme</name>
        <dbReference type="ChEBI" id="CHEBI:30413"/>
    </ligand>
    <ligandPart>
        <name>Fe</name>
        <dbReference type="ChEBI" id="CHEBI:18248"/>
    </ligandPart>
</feature>
<feature type="non-terminal residue" evidence="5">
    <location>
        <position position="1"/>
    </location>
</feature>
<dbReference type="EC" id="1.14.-.-"/>
<dbReference type="EMBL" id="BQ968925">
    <property type="status" value="NOT_ANNOTATED_CDS"/>
    <property type="molecule type" value="mRNA"/>
</dbReference>
<dbReference type="SMR" id="P85191"/>
<dbReference type="GO" id="GO:0020037">
    <property type="term" value="F:heme binding"/>
    <property type="evidence" value="ECO:0007669"/>
    <property type="project" value="InterPro"/>
</dbReference>
<dbReference type="GO" id="GO:0005506">
    <property type="term" value="F:iron ion binding"/>
    <property type="evidence" value="ECO:0007669"/>
    <property type="project" value="InterPro"/>
</dbReference>
<dbReference type="GO" id="GO:0004497">
    <property type="term" value="F:monooxygenase activity"/>
    <property type="evidence" value="ECO:0007669"/>
    <property type="project" value="UniProtKB-KW"/>
</dbReference>
<dbReference type="GO" id="GO:0016705">
    <property type="term" value="F:oxidoreductase activity, acting on paired donors, with incorporation or reduction of molecular oxygen"/>
    <property type="evidence" value="ECO:0007669"/>
    <property type="project" value="InterPro"/>
</dbReference>
<dbReference type="Gene3D" id="1.10.630.10">
    <property type="entry name" value="Cytochrome P450"/>
    <property type="match status" value="1"/>
</dbReference>
<dbReference type="InterPro" id="IPR001128">
    <property type="entry name" value="Cyt_P450"/>
</dbReference>
<dbReference type="InterPro" id="IPR002403">
    <property type="entry name" value="Cyt_P450_E_grp-IV"/>
</dbReference>
<dbReference type="InterPro" id="IPR036396">
    <property type="entry name" value="Cyt_P450_sf"/>
</dbReference>
<dbReference type="PANTHER" id="PTHR24296">
    <property type="entry name" value="CYTOCHROME P450"/>
    <property type="match status" value="1"/>
</dbReference>
<dbReference type="Pfam" id="PF00067">
    <property type="entry name" value="p450"/>
    <property type="match status" value="1"/>
</dbReference>
<dbReference type="PRINTS" id="PR00465">
    <property type="entry name" value="EP450IV"/>
</dbReference>
<dbReference type="SUPFAM" id="SSF48264">
    <property type="entry name" value="Cytochrome P450"/>
    <property type="match status" value="1"/>
</dbReference>
<accession>P85191</accession>